<organism>
    <name type="scientific">Caenorhabditis elegans</name>
    <dbReference type="NCBI Taxonomy" id="6239"/>
    <lineage>
        <taxon>Eukaryota</taxon>
        <taxon>Metazoa</taxon>
        <taxon>Ecdysozoa</taxon>
        <taxon>Nematoda</taxon>
        <taxon>Chromadorea</taxon>
        <taxon>Rhabditida</taxon>
        <taxon>Rhabditina</taxon>
        <taxon>Rhabditomorpha</taxon>
        <taxon>Rhabditoidea</taxon>
        <taxon>Rhabditidae</taxon>
        <taxon>Peloderinae</taxon>
        <taxon>Caenorhabditis</taxon>
    </lineage>
</organism>
<dbReference type="EMBL" id="FO080163">
    <property type="protein sequence ID" value="CCD61712.1"/>
    <property type="molecule type" value="Genomic_DNA"/>
</dbReference>
<dbReference type="PIR" id="S27790">
    <property type="entry name" value="S27790"/>
</dbReference>
<dbReference type="RefSeq" id="NP_498920.2">
    <property type="nucleotide sequence ID" value="NM_066519.5"/>
</dbReference>
<dbReference type="SMR" id="P34260"/>
<dbReference type="BioGRID" id="41424">
    <property type="interactions" value="2"/>
</dbReference>
<dbReference type="ComplexPortal" id="CPX-1136">
    <property type="entry name" value="HOPS tethering complex"/>
</dbReference>
<dbReference type="FunCoup" id="P34260">
    <property type="interactions" value="1008"/>
</dbReference>
<dbReference type="IntAct" id="P34260">
    <property type="interactions" value="2"/>
</dbReference>
<dbReference type="STRING" id="6239.B0303.9.1"/>
<dbReference type="PaxDb" id="6239-B0303.9"/>
<dbReference type="PeptideAtlas" id="P34260"/>
<dbReference type="EnsemblMetazoa" id="B0303.9.1">
    <property type="protein sequence ID" value="B0303.9.1"/>
    <property type="gene ID" value="WBGene00015130"/>
</dbReference>
<dbReference type="GeneID" id="176221"/>
<dbReference type="KEGG" id="cel:CELE_B0303.9"/>
<dbReference type="AGR" id="WB:WBGene00015130"/>
<dbReference type="CTD" id="176221"/>
<dbReference type="WormBase" id="B0303.9">
    <property type="protein sequence ID" value="CE00539"/>
    <property type="gene ID" value="WBGene00015130"/>
    <property type="gene designation" value="vps-33.1"/>
</dbReference>
<dbReference type="eggNOG" id="KOG1302">
    <property type="taxonomic scope" value="Eukaryota"/>
</dbReference>
<dbReference type="GeneTree" id="ENSGT00940000155165"/>
<dbReference type="HOGENOM" id="CLU_026398_0_0_1"/>
<dbReference type="InParanoid" id="P34260"/>
<dbReference type="OMA" id="EFHIFFV"/>
<dbReference type="OrthoDB" id="10262287at2759"/>
<dbReference type="PhylomeDB" id="P34260"/>
<dbReference type="PRO" id="PR:P34260"/>
<dbReference type="Proteomes" id="UP000001940">
    <property type="component" value="Chromosome III"/>
</dbReference>
<dbReference type="Bgee" id="WBGene00015130">
    <property type="expression patterns" value="Expressed in germ line (C elegans) and 4 other cell types or tissues"/>
</dbReference>
<dbReference type="GO" id="GO:0016324">
    <property type="term" value="C:apical plasma membrane"/>
    <property type="evidence" value="ECO:0007669"/>
    <property type="project" value="UniProtKB-SubCell"/>
</dbReference>
<dbReference type="GO" id="GO:0033263">
    <property type="term" value="C:CORVET complex"/>
    <property type="evidence" value="ECO:0000318"/>
    <property type="project" value="GO_Central"/>
</dbReference>
<dbReference type="GO" id="GO:0005769">
    <property type="term" value="C:early endosome"/>
    <property type="evidence" value="ECO:0007669"/>
    <property type="project" value="UniProtKB-SubCell"/>
</dbReference>
<dbReference type="GO" id="GO:0030897">
    <property type="term" value="C:HOPS complex"/>
    <property type="evidence" value="ECO:0000250"/>
    <property type="project" value="WormBase"/>
</dbReference>
<dbReference type="GO" id="GO:0005770">
    <property type="term" value="C:late endosome"/>
    <property type="evidence" value="ECO:0007669"/>
    <property type="project" value="UniProtKB-SubCell"/>
</dbReference>
<dbReference type="GO" id="GO:0005764">
    <property type="term" value="C:lysosome"/>
    <property type="evidence" value="ECO:0000318"/>
    <property type="project" value="GO_Central"/>
</dbReference>
<dbReference type="GO" id="GO:0006886">
    <property type="term" value="P:intracellular protein transport"/>
    <property type="evidence" value="ECO:0000318"/>
    <property type="project" value="GO_Central"/>
</dbReference>
<dbReference type="GO" id="GO:0042144">
    <property type="term" value="P:vacuole fusion, non-autophagic"/>
    <property type="evidence" value="ECO:0000303"/>
    <property type="project" value="ComplexPortal"/>
</dbReference>
<dbReference type="GO" id="GO:0016192">
    <property type="term" value="P:vesicle-mediated transport"/>
    <property type="evidence" value="ECO:0000318"/>
    <property type="project" value="GO_Central"/>
</dbReference>
<dbReference type="Gene3D" id="1.25.40.850">
    <property type="match status" value="1"/>
</dbReference>
<dbReference type="Gene3D" id="3.40.50.1910">
    <property type="match status" value="1"/>
</dbReference>
<dbReference type="Gene3D" id="3.40.50.2060">
    <property type="match status" value="1"/>
</dbReference>
<dbReference type="Gene3D" id="3.90.830.10">
    <property type="entry name" value="Syntaxin Binding Protein 1, Chain A, domain 2"/>
    <property type="match status" value="1"/>
</dbReference>
<dbReference type="InterPro" id="IPR043154">
    <property type="entry name" value="Sec-1-like_dom1"/>
</dbReference>
<dbReference type="InterPro" id="IPR043127">
    <property type="entry name" value="Sec-1-like_dom3a"/>
</dbReference>
<dbReference type="InterPro" id="IPR001619">
    <property type="entry name" value="Sec1-like"/>
</dbReference>
<dbReference type="InterPro" id="IPR027482">
    <property type="entry name" value="Sec1-like_dom2"/>
</dbReference>
<dbReference type="InterPro" id="IPR036045">
    <property type="entry name" value="Sec1-like_sf"/>
</dbReference>
<dbReference type="InterPro" id="IPR043155">
    <property type="entry name" value="VPS33_dom3b"/>
</dbReference>
<dbReference type="PANTHER" id="PTHR11679">
    <property type="entry name" value="VESICLE PROTEIN SORTING-ASSOCIATED"/>
    <property type="match status" value="1"/>
</dbReference>
<dbReference type="Pfam" id="PF00995">
    <property type="entry name" value="Sec1"/>
    <property type="match status" value="1"/>
</dbReference>
<dbReference type="PIRSF" id="PIRSF005715">
    <property type="entry name" value="VPS45_Sec1"/>
    <property type="match status" value="1"/>
</dbReference>
<dbReference type="SUPFAM" id="SSF56815">
    <property type="entry name" value="Sec1/munc18-like (SM) proteins"/>
    <property type="match status" value="1"/>
</dbReference>
<proteinExistence type="evidence at protein level"/>
<feature type="chain" id="PRO_0000071960" description="Vacuolar protein sorting-associated protein 33A">
    <location>
        <begin position="1"/>
        <end position="603"/>
    </location>
</feature>
<evidence type="ECO:0000250" key="1">
    <source>
        <dbReference type="UniProtKB" id="Q96AX1"/>
    </source>
</evidence>
<evidence type="ECO:0000269" key="2">
    <source>
    </source>
</evidence>
<evidence type="ECO:0000269" key="3">
    <source>
    </source>
</evidence>
<evidence type="ECO:0000269" key="4">
    <source>
    </source>
</evidence>
<evidence type="ECO:0000269" key="5">
    <source>
    </source>
</evidence>
<evidence type="ECO:0000269" key="6">
    <source>
    </source>
</evidence>
<evidence type="ECO:0000303" key="7">
    <source>
    </source>
</evidence>
<evidence type="ECO:0000305" key="8"/>
<evidence type="ECO:0000305" key="9">
    <source>
    </source>
</evidence>
<evidence type="ECO:0000305" key="10">
    <source>
    </source>
</evidence>
<evidence type="ECO:0000312" key="11">
    <source>
        <dbReference type="WormBase" id="B0303.9"/>
    </source>
</evidence>
<sequence>MAANEDRDDAAAILNWEGTSEIKSANEYSRNLLFSVLDSLDGNKTIVWDRDRSVMHRVNLFAGASVLAAHGVVANHSIETKKSASTPHVVFFLAPTMVSLDLLCDYIDNVRNDSKILYQVFFIPEAWFVVRESLKTRAEGKYWERLESVKEIPLCWLPRDGECLSLSSPQIAARLLINGDWTHLHKCAVALNQLIDMCRGRSSSSNQRPMSIYAKGKWASDVAKMMGKIRNSAEADSMTKNLDPIEGLLKINRIVLIDRWMDPLTPMLSQLTFYGLLDEIYGIGMVNSVKVPEMEFKNEKDGDPFQEKEVYLIDEVYHRLKHSHINAVSIEASKVLAEIRDDEQFDRDKMSVAEYSVLVKKMPKIINRKKMIEVHMRLAEMIQSHVYCKQSDSIKLERDLLEYSDSDKAIPLIEDLIFDASPLNAVLRLISVHSLTCGGLKPSVLQHYRRIVNQSYGSSALNKVLKMQKMGLIREKGGGGKMQCEYAQMMFQQMKKNHDMLPEEFSEAKLDDMAYAYSGFSPLLCKMLEEGDRVKWVGWPKTVIGDKSDLIAERDGRGTCVFVIGGLTRSELAIIRENLPNVALITTSALITGDKLLNNITNI</sequence>
<comment type="function">
    <text evidence="1 3 4 5 6">Plays a role in vesicle-mediated protein trafficking to lysosomal compartments including the endocytic membrane transport pathways (PubMed:25273556, PubMed:26783301, PubMed:27558849). Believed to act as a component of the putative HOPS endosomal tethering complex which is proposed to be involved in the rab-5-to-rab-7 endosome conversion probably implicating sand-1, and via binding SNAREs and SNARE complexes to mediate tethering and docking events during SNARE-mediated membrane fusion (PubMed:25273556). The HOPS complex is proposed to be recruited to rab-7 on the late endosomal membrane and to regulate late endocytic, phagocytic and autophagic traffic towards lysosomes (By similarity). Within the HOPS complex, contributes to the normal development of gut granules in embryonic and adult intestinal cells (PubMed:24501423, PubMed:25273556). Required for endosome/lysosome fusion (PubMed:26783301, PubMed:27558849). Required for early embryonic development (PubMed:27558849).</text>
</comment>
<comment type="subunit">
    <text evidence="2 9 10">Probable component of the homotypic fusion and vacuole protein sorting (HOPS) complex consisting of the core class C Vps proteins vps-11, vps-16, vps-18, and which further associates with vps-33.1, vps-39 and vps-41 (PubMed:24501423, PubMed:25273556). Interacts with spe-39 (PubMed:19109425).</text>
</comment>
<comment type="interaction">
    <interactant intactId="EBI-312046">
        <id>P34260</id>
    </interactant>
    <interactant intactId="EBI-312052">
        <id>Q93934</id>
        <label>adk-1</label>
    </interactant>
    <organismsDiffer>false</organismsDiffer>
    <experiments>2</experiments>
</comment>
<comment type="subcellular location">
    <subcellularLocation>
        <location evidence="4">Lysosome</location>
    </subcellularLocation>
    <subcellularLocation>
        <location evidence="6">Early endosome</location>
    </subcellularLocation>
    <subcellularLocation>
        <location evidence="4 6">Late endosome</location>
    </subcellularLocation>
    <subcellularLocation>
        <location evidence="4">Apical cell membrane</location>
        <topology evidence="4">Peripheral membrane protein</topology>
    </subcellularLocation>
    <text evidence="4">Localizes to lysosome-related gut granules.</text>
</comment>
<comment type="tissue specificity">
    <text evidence="4 6">Ubiquitously expressed at high levels in somatic tissues including the pharynx, muscles, hypodermis, neurons, coelomocytes and spermatheca (PubMed:27558849). Expressed in the intestine (PubMed:25273556, PubMed:27558849).</text>
</comment>
<comment type="disruption phenotype">
    <text evidence="3 4 5 6">Viable, and develop into fertile adults, but their progeny arrest before embryonic morphogenesis (PubMed:27558849). Defective endosome/lysosome size and fusion, and delayed endocytic trafficking to lysosomes in coelomocytes (PubMed:26783301, PubMed:27558849). Reduced number of gut granules in the adult intestine (PubMed:24501423, PubMed:27558849). RNAi-mediated knockdown results in a reduced number of gut granules in embryonic intestinal cells (PubMed:24501423). RNAi-mediated knockdown results in the accumulation of lysosomal proteins such as lmp-1 in early endocytic compartments, and the formation of large late endosomes/lysosomes, but with simultaneous expression of rab-5- and rab-7-positive vesicles on the basal side of gut cells (PubMed:25273556). Double RNAi-mediated knockdown together with vsp-33.2 results in defective protein trafficking to lysosomal compartments, and an irregular distribution of vesicles of various sizes throughout the gut cells. RNAi-mediated knockdown in a sand-1 mutant background results in no viable offspring (PubMed:25273556). Double RNAi-mediated knockdown together with vsp-33.1 in a sand-1 mutant background rescues the large endosome phenotype and the defective protein trafficking to lysosomal compartments in the sand-1 single mutant, but still results in lethality (PubMed:25273556). Double knockout with tbc-2 or single knockout in a constitutively active rab-5 mutant background, rescues the large endosome formation defect in coelomocytes in the individual tbc-2 single and constitutively active rab-5 mutants (PubMed:27558849).</text>
</comment>
<comment type="similarity">
    <text evidence="8">Belongs to the STXBP/unc-18/SEC1 family.</text>
</comment>
<reference key="1">
    <citation type="journal article" date="1992" name="Nature">
        <title>The C. elegans genome sequencing project: a beginning.</title>
        <authorList>
            <person name="Sulston J."/>
            <person name="Du Z."/>
            <person name="Thomas K."/>
            <person name="Wilson R."/>
            <person name="Hillier L."/>
            <person name="Staden R."/>
            <person name="Halloran N."/>
            <person name="Green P."/>
            <person name="Thierry-Mieg J."/>
            <person name="Qiu L."/>
            <person name="Dear S."/>
            <person name="Coulson A."/>
            <person name="Craxton M."/>
            <person name="Durbin R."/>
            <person name="Berks M."/>
            <person name="Metzstein M."/>
            <person name="Hawkins T."/>
            <person name="Ainscough R."/>
            <person name="Waterston R."/>
        </authorList>
    </citation>
    <scope>NUCLEOTIDE SEQUENCE [LARGE SCALE GENOMIC DNA]</scope>
    <source>
        <strain>Bristol N2</strain>
    </source>
</reference>
<reference key="2">
    <citation type="journal article" date="1998" name="Science">
        <title>Genome sequence of the nematode C. elegans: a platform for investigating biology.</title>
        <authorList>
            <consortium name="The C. elegans sequencing consortium"/>
        </authorList>
    </citation>
    <scope>NUCLEOTIDE SEQUENCE [LARGE SCALE GENOMIC DNA]</scope>
    <source>
        <strain>Bristol N2</strain>
    </source>
</reference>
<reference key="3">
    <citation type="journal article" date="2009" name="Mol. Biol. Cell">
        <title>SPE-39 family proteins interact with the HOPS complex and function in lysosomal delivery.</title>
        <authorList>
            <person name="Zhu G.D."/>
            <person name="Salazar G."/>
            <person name="Zlatic S.A."/>
            <person name="Fiza B."/>
            <person name="Doucette M.M."/>
            <person name="Heilman C.J."/>
            <person name="Levey A.I."/>
            <person name="Faundez V."/>
            <person name="L'hernault S.W."/>
        </authorList>
    </citation>
    <scope>INTERACTION WITH SPE-39</scope>
</reference>
<reference key="4">
    <citation type="journal article" date="2014" name="Mol. Biol. Cell">
        <title>Caenorhabditis elegans HOPS and CCZ-1 mediate trafficking to lysosome-related organelles independently of RAB-7 and SAND-1.</title>
        <authorList>
            <person name="Delahaye J.L."/>
            <person name="Foster O.K."/>
            <person name="Vine A."/>
            <person name="Saxton D.S."/>
            <person name="Curtin T.P."/>
            <person name="Somhegyi H."/>
            <person name="Salesky R."/>
            <person name="Hermann G.J."/>
        </authorList>
    </citation>
    <scope>FUNCTION</scope>
    <scope>DISRUPTION PHENOTYPE</scope>
</reference>
<reference key="5">
    <citation type="journal article" date="2014" name="Mol. Biol. Cell">
        <title>Loss of the Sec1/Munc18-family proteins VPS-33.2 and VPS-33.1 bypasses a block in endosome maturation in Caenorhabditis elegans.</title>
        <authorList>
            <person name="Solinger J.A."/>
            <person name="Spang A."/>
        </authorList>
    </citation>
    <scope>FUNCTION</scope>
    <scope>SUBCELLULAR LOCATION</scope>
    <scope>TISSUE SPECIFICITY</scope>
    <scope>DISRUPTION PHENOTYPE</scope>
</reference>
<reference key="6">
    <citation type="journal article" date="2016" name="J. Cell Biol.">
        <title>Negative regulation of phosphatidylinositol 3-phosphate levels in early-to-late endosome conversion.</title>
        <authorList>
            <person name="Liu K."/>
            <person name="Jian Y."/>
            <person name="Sun X."/>
            <person name="Yang C."/>
            <person name="Gao Z."/>
            <person name="Zhang Z."/>
            <person name="Liu X."/>
            <person name="Li Y."/>
            <person name="Xu J."/>
            <person name="Jing Y."/>
            <person name="Mitani S."/>
            <person name="He S."/>
            <person name="Yang C."/>
        </authorList>
    </citation>
    <scope>FUNCTION</scope>
    <scope>DISRUPTION PHENOTYPE</scope>
</reference>
<reference key="7">
    <citation type="journal article" date="2016" name="J. Cell Biol.">
        <title>Correction: Negative regulation of phosphatidylinositol 3-phosphate levels in early-to-late endosome conversion.</title>
        <authorList>
            <person name="Liu K."/>
            <person name="Jian Y."/>
            <person name="Sun X."/>
            <person name="Yang C."/>
            <person name="Gao Z."/>
            <person name="Zhang Z."/>
            <person name="Liu X."/>
            <person name="Li Y."/>
            <person name="Xu J."/>
            <person name="Jing Y."/>
            <person name="Mitani S."/>
            <person name="He S."/>
            <person name="Yang C."/>
        </authorList>
    </citation>
    <scope>ERRATUM OF PUBMED:26783301</scope>
</reference>
<reference key="8">
    <citation type="journal article" date="2016" name="Traffic">
        <title>Distinct roles of the two VPS33 proteins in the endolysosomal system in Caenorhabditis elegans.</title>
        <authorList>
            <person name="Gengyo-Ando K."/>
            <person name="Kage-Nakadai E."/>
            <person name="Yoshina S."/>
            <person name="Otori M."/>
            <person name="Kagawa-Nagamura Y."/>
            <person name="Nakai J."/>
            <person name="Mitani S."/>
        </authorList>
    </citation>
    <scope>FUNCTION</scope>
    <scope>SUBCELLULAR LOCATION</scope>
    <scope>TISSUE SPECIFICITY</scope>
    <scope>DISRUPTION PHENOTYPE</scope>
</reference>
<gene>
    <name evidence="11" type="primary">vps-33.1</name>
    <name evidence="7" type="synonym">slp-1</name>
    <name evidence="11" type="ORF">B0303.9</name>
</gene>
<accession>P34260</accession>
<protein>
    <recommendedName>
        <fullName>Vacuolar protein sorting-associated protein 33A</fullName>
    </recommendedName>
    <alternativeName>
        <fullName>Protein slp-1</fullName>
    </alternativeName>
</protein>
<name>VP33A_CAEEL</name>
<keyword id="KW-1003">Cell membrane</keyword>
<keyword id="KW-0967">Endosome</keyword>
<keyword id="KW-0458">Lysosome</keyword>
<keyword id="KW-0472">Membrane</keyword>
<keyword id="KW-0653">Protein transport</keyword>
<keyword id="KW-1185">Reference proteome</keyword>
<keyword id="KW-0813">Transport</keyword>